<sequence>MDRSQALYYPWDSFCLLSRCSIFILSTTLEDSRTLLSHLGLQNPHEVQGTFVPEARVPGVRLEATAGHQSLSEPSGWVYYRHKHSDLVDPADLHLQGASYRRSTIRSYLMVKKVLYLVSSAP</sequence>
<accession>B1A0U8</accession>
<reference key="1">
    <citation type="journal article" date="2008" name="Microbiology">
        <title>Determination of a transcriptional regulator-like gene involved in biosynthesis of elsinochrome phytotoxin by the citrus scab fungus, Elsinoe fawcettii.</title>
        <authorList>
            <person name="Chung K.R."/>
            <person name="Liao H.L."/>
        </authorList>
    </citation>
    <scope>NUCLEOTIDE SEQUENCE [GENOMIC DNA]</scope>
    <scope>IDENTIFICATION</scope>
    <scope>FUNCTION</scope>
    <scope>INDUCTION</scope>
</reference>
<reference key="2">
    <citation type="journal article" date="2011" name="Mol. Plant Pathol.">
        <title>Elsinoe fawcettii and Elsinoe australis: the fungal pathogens causing citrus scab.</title>
        <authorList>
            <person name="Chung K.R."/>
        </authorList>
    </citation>
    <scope>REVIEW</scope>
</reference>
<proteinExistence type="evidence at transcript level"/>
<evidence type="ECO:0000269" key="1">
    <source>
    </source>
</evidence>
<evidence type="ECO:0000303" key="2">
    <source>
    </source>
</evidence>
<evidence type="ECO:0000303" key="3">
    <source>
    </source>
</evidence>
<feature type="chain" id="PRO_0000445826" description="Elsinochromes biosynthesis cluster protein HP4">
    <location>
        <begin position="1"/>
        <end position="122"/>
    </location>
</feature>
<organism>
    <name type="scientific">Elsinoe fawcettii</name>
    <name type="common">Citrus scab fungus</name>
    <name type="synonym">Sphaceloma fawcettii</name>
    <dbReference type="NCBI Taxonomy" id="40997"/>
    <lineage>
        <taxon>Eukaryota</taxon>
        <taxon>Fungi</taxon>
        <taxon>Dikarya</taxon>
        <taxon>Ascomycota</taxon>
        <taxon>Pezizomycotina</taxon>
        <taxon>Dothideomycetes</taxon>
        <taxon>Dothideomycetidae</taxon>
        <taxon>Myriangiales</taxon>
        <taxon>Elsinoaceae</taxon>
        <taxon>Elsinoe</taxon>
    </lineage>
</organism>
<dbReference type="EMBL" id="EU414202">
    <property type="protein sequence ID" value="ABZ82012.1"/>
    <property type="molecule type" value="Genomic_DNA"/>
</dbReference>
<name>HP4_ELSFA</name>
<gene>
    <name evidence="2" type="primary">HP4</name>
</gene>
<comment type="function">
    <text evidence="1 3">Part of the gene cluster that mediates the biosynthesis of elsinochromes, pigments consisting of at least four interconvertible tautomers (A, B, C and D) that have a core phenolic quinone to which various side chains are attached and which play an important role in fungal pathogenesis (PubMed:18957608). The non-reducing polyketide synthase PKS1 was proposed to iteratively catalyze decarboxylation between acetyl-CoA and malonyl-CoA subunits for polyketide chain elongation. The released polyketide undergoes cyclization to form an aromatic ring, and proceeds via serial modification steps to produce the heptaketide back- bone of elsinochrome. As elsinochrome has a symmetrical structure, two identical heptaketides are fused to form a core 1,2-dihydrobenzo-perylene ring structure, which can then be successively modified to produce the various derivatives of elsinochrome. Some of these reactions may be cooperatively carried out, at least in part, by the products of RDT1, OXR1 and PKS1. PRF1, embedded within the elsinochrome cluster possibly functions to stabilize some of the biosynthetic enzymes required for elsinochrome production. As prefoldin is a hexamer containing 2 a and 4 b subunits, additional prefoldin subunits, whose coding genes may not immediately link to the elsinochrome biosynthetic gene cluster, are required to fulfill the chaperone function. In addition, no methyltransferase-coding gene exists within the biosynthetic gene cluster, even though elsinochrome has four methyl groups at positions C3, C7, C8 and C12. Apparently, the identified gene cluster does not contain the entire entourage of genes responsible for elsinochrome biosynthesis. Once elsinochrome is synthesized, it must be exported outside the fungal cells, which is probably accomplished by the ECT1 transporter, to avoid toxicity (PubMed:21199563).</text>
</comment>
<comment type="induction">
    <text evidence="1">Expression is up-regulated during nitrogen starvation.</text>
</comment>
<protein>
    <recommendedName>
        <fullName evidence="2">Elsinochromes biosynthesis cluster protein HP4</fullName>
    </recommendedName>
</protein>